<evidence type="ECO:0000255" key="1">
    <source>
        <dbReference type="HAMAP-Rule" id="MF_01366"/>
    </source>
</evidence>
<evidence type="ECO:0000305" key="2"/>
<sequence>MPTYAPKAGDTTCSWYVIDATDVVLGRLAAVAATLLRGKHKPTFAPNVDGGDFVIVINADKVAISGDKVQHKMVYRHSGYPGGLRKRTIGELMQKHPDRVVEKAIVGMLPKNKLSRQIQRKLRVYAGPDHPHSAQQPVPFEIKQVAQ</sequence>
<comment type="function">
    <text evidence="1">This protein is one of the early assembly proteins of the 50S ribosomal subunit, although it is not seen to bind rRNA by itself. It is important during the early stages of 50S assembly.</text>
</comment>
<comment type="subunit">
    <text evidence="1">Part of the 50S ribosomal subunit.</text>
</comment>
<comment type="similarity">
    <text evidence="1">Belongs to the universal ribosomal protein uL13 family.</text>
</comment>
<name>RL13_MYCLE</name>
<gene>
    <name evidence="1" type="primary">rplM</name>
    <name type="ordered locus">ML0364</name>
    <name type="ORF">B229_C3_232</name>
</gene>
<dbReference type="EMBL" id="U00020">
    <property type="protein sequence ID" value="AAA17305.1"/>
    <property type="molecule type" value="Genomic_DNA"/>
</dbReference>
<dbReference type="EMBL" id="AL583918">
    <property type="protein sequence ID" value="CAC29872.1"/>
    <property type="molecule type" value="Genomic_DNA"/>
</dbReference>
<dbReference type="PIR" id="S72991">
    <property type="entry name" value="S72991"/>
</dbReference>
<dbReference type="RefSeq" id="NP_301360.1">
    <property type="nucleotide sequence ID" value="NC_002677.1"/>
</dbReference>
<dbReference type="RefSeq" id="WP_010907684.1">
    <property type="nucleotide sequence ID" value="NC_002677.1"/>
</dbReference>
<dbReference type="SMR" id="P38014"/>
<dbReference type="STRING" id="272631.gene:17574183"/>
<dbReference type="KEGG" id="mle:ML0364"/>
<dbReference type="PATRIC" id="fig|272631.5.peg.616"/>
<dbReference type="Leproma" id="ML0364"/>
<dbReference type="eggNOG" id="COG0102">
    <property type="taxonomic scope" value="Bacteria"/>
</dbReference>
<dbReference type="HOGENOM" id="CLU_082184_2_2_11"/>
<dbReference type="OrthoDB" id="9801330at2"/>
<dbReference type="Proteomes" id="UP000000806">
    <property type="component" value="Chromosome"/>
</dbReference>
<dbReference type="GO" id="GO:0022625">
    <property type="term" value="C:cytosolic large ribosomal subunit"/>
    <property type="evidence" value="ECO:0007669"/>
    <property type="project" value="TreeGrafter"/>
</dbReference>
<dbReference type="GO" id="GO:0003729">
    <property type="term" value="F:mRNA binding"/>
    <property type="evidence" value="ECO:0007669"/>
    <property type="project" value="TreeGrafter"/>
</dbReference>
<dbReference type="GO" id="GO:0003735">
    <property type="term" value="F:structural constituent of ribosome"/>
    <property type="evidence" value="ECO:0007669"/>
    <property type="project" value="InterPro"/>
</dbReference>
<dbReference type="GO" id="GO:0017148">
    <property type="term" value="P:negative regulation of translation"/>
    <property type="evidence" value="ECO:0007669"/>
    <property type="project" value="TreeGrafter"/>
</dbReference>
<dbReference type="GO" id="GO:0006412">
    <property type="term" value="P:translation"/>
    <property type="evidence" value="ECO:0007669"/>
    <property type="project" value="UniProtKB-UniRule"/>
</dbReference>
<dbReference type="CDD" id="cd00392">
    <property type="entry name" value="Ribosomal_L13"/>
    <property type="match status" value="1"/>
</dbReference>
<dbReference type="FunFam" id="3.90.1180.10:FF:000001">
    <property type="entry name" value="50S ribosomal protein L13"/>
    <property type="match status" value="1"/>
</dbReference>
<dbReference type="Gene3D" id="3.90.1180.10">
    <property type="entry name" value="Ribosomal protein L13"/>
    <property type="match status" value="1"/>
</dbReference>
<dbReference type="HAMAP" id="MF_01366">
    <property type="entry name" value="Ribosomal_uL13"/>
    <property type="match status" value="1"/>
</dbReference>
<dbReference type="InterPro" id="IPR005822">
    <property type="entry name" value="Ribosomal_uL13"/>
</dbReference>
<dbReference type="InterPro" id="IPR005823">
    <property type="entry name" value="Ribosomal_uL13_bac-type"/>
</dbReference>
<dbReference type="InterPro" id="IPR023563">
    <property type="entry name" value="Ribosomal_uL13_CS"/>
</dbReference>
<dbReference type="InterPro" id="IPR036899">
    <property type="entry name" value="Ribosomal_uL13_sf"/>
</dbReference>
<dbReference type="NCBIfam" id="TIGR01066">
    <property type="entry name" value="rplM_bact"/>
    <property type="match status" value="1"/>
</dbReference>
<dbReference type="PANTHER" id="PTHR11545:SF2">
    <property type="entry name" value="LARGE RIBOSOMAL SUBUNIT PROTEIN UL13M"/>
    <property type="match status" value="1"/>
</dbReference>
<dbReference type="PANTHER" id="PTHR11545">
    <property type="entry name" value="RIBOSOMAL PROTEIN L13"/>
    <property type="match status" value="1"/>
</dbReference>
<dbReference type="Pfam" id="PF00572">
    <property type="entry name" value="Ribosomal_L13"/>
    <property type="match status" value="1"/>
</dbReference>
<dbReference type="PIRSF" id="PIRSF002181">
    <property type="entry name" value="Ribosomal_L13"/>
    <property type="match status" value="1"/>
</dbReference>
<dbReference type="SUPFAM" id="SSF52161">
    <property type="entry name" value="Ribosomal protein L13"/>
    <property type="match status" value="1"/>
</dbReference>
<dbReference type="PROSITE" id="PS00783">
    <property type="entry name" value="RIBOSOMAL_L13"/>
    <property type="match status" value="1"/>
</dbReference>
<proteinExistence type="inferred from homology"/>
<keyword id="KW-1185">Reference proteome</keyword>
<keyword id="KW-0687">Ribonucleoprotein</keyword>
<keyword id="KW-0689">Ribosomal protein</keyword>
<organism>
    <name type="scientific">Mycobacterium leprae (strain TN)</name>
    <dbReference type="NCBI Taxonomy" id="272631"/>
    <lineage>
        <taxon>Bacteria</taxon>
        <taxon>Bacillati</taxon>
        <taxon>Actinomycetota</taxon>
        <taxon>Actinomycetes</taxon>
        <taxon>Mycobacteriales</taxon>
        <taxon>Mycobacteriaceae</taxon>
        <taxon>Mycobacterium</taxon>
    </lineage>
</organism>
<feature type="chain" id="PRO_0000133742" description="Large ribosomal subunit protein uL13">
    <location>
        <begin position="1"/>
        <end position="147"/>
    </location>
</feature>
<reference key="1">
    <citation type="submission" date="1994-03" db="EMBL/GenBank/DDBJ databases">
        <authorList>
            <person name="Smith D.R."/>
            <person name="Robison K."/>
        </authorList>
    </citation>
    <scope>NUCLEOTIDE SEQUENCE [GENOMIC DNA]</scope>
</reference>
<reference key="2">
    <citation type="journal article" date="2001" name="Nature">
        <title>Massive gene decay in the leprosy bacillus.</title>
        <authorList>
            <person name="Cole S.T."/>
            <person name="Eiglmeier K."/>
            <person name="Parkhill J."/>
            <person name="James K.D."/>
            <person name="Thomson N.R."/>
            <person name="Wheeler P.R."/>
            <person name="Honore N."/>
            <person name="Garnier T."/>
            <person name="Churcher C.M."/>
            <person name="Harris D.E."/>
            <person name="Mungall K.L."/>
            <person name="Basham D."/>
            <person name="Brown D."/>
            <person name="Chillingworth T."/>
            <person name="Connor R."/>
            <person name="Davies R.M."/>
            <person name="Devlin K."/>
            <person name="Duthoy S."/>
            <person name="Feltwell T."/>
            <person name="Fraser A."/>
            <person name="Hamlin N."/>
            <person name="Holroyd S."/>
            <person name="Hornsby T."/>
            <person name="Jagels K."/>
            <person name="Lacroix C."/>
            <person name="Maclean J."/>
            <person name="Moule S."/>
            <person name="Murphy L.D."/>
            <person name="Oliver K."/>
            <person name="Quail M.A."/>
            <person name="Rajandream M.A."/>
            <person name="Rutherford K.M."/>
            <person name="Rutter S."/>
            <person name="Seeger K."/>
            <person name="Simon S."/>
            <person name="Simmonds M."/>
            <person name="Skelton J."/>
            <person name="Squares R."/>
            <person name="Squares S."/>
            <person name="Stevens K."/>
            <person name="Taylor K."/>
            <person name="Whitehead S."/>
            <person name="Woodward J.R."/>
            <person name="Barrell B.G."/>
        </authorList>
    </citation>
    <scope>NUCLEOTIDE SEQUENCE [LARGE SCALE GENOMIC DNA]</scope>
    <source>
        <strain>TN</strain>
    </source>
</reference>
<accession>P38014</accession>
<protein>
    <recommendedName>
        <fullName evidence="1">Large ribosomal subunit protein uL13</fullName>
    </recommendedName>
    <alternativeName>
        <fullName evidence="2">50S ribosomal protein L13</fullName>
    </alternativeName>
</protein>